<dbReference type="EMBL" id="CP000539">
    <property type="protein sequence ID" value="ABM44015.1"/>
    <property type="molecule type" value="Genomic_DNA"/>
</dbReference>
<dbReference type="STRING" id="232721.Ajs_3909"/>
<dbReference type="KEGG" id="ajs:Ajs_3909"/>
<dbReference type="eggNOG" id="COG3158">
    <property type="taxonomic scope" value="Bacteria"/>
</dbReference>
<dbReference type="HOGENOM" id="CLU_008142_4_2_4"/>
<dbReference type="Proteomes" id="UP000000645">
    <property type="component" value="Chromosome"/>
</dbReference>
<dbReference type="GO" id="GO:0005886">
    <property type="term" value="C:plasma membrane"/>
    <property type="evidence" value="ECO:0007669"/>
    <property type="project" value="UniProtKB-SubCell"/>
</dbReference>
<dbReference type="GO" id="GO:0015079">
    <property type="term" value="F:potassium ion transmembrane transporter activity"/>
    <property type="evidence" value="ECO:0007669"/>
    <property type="project" value="UniProtKB-UniRule"/>
</dbReference>
<dbReference type="GO" id="GO:0015293">
    <property type="term" value="F:symporter activity"/>
    <property type="evidence" value="ECO:0007669"/>
    <property type="project" value="UniProtKB-UniRule"/>
</dbReference>
<dbReference type="HAMAP" id="MF_01522">
    <property type="entry name" value="Kup"/>
    <property type="match status" value="1"/>
</dbReference>
<dbReference type="InterPro" id="IPR003855">
    <property type="entry name" value="K+_transporter"/>
</dbReference>
<dbReference type="InterPro" id="IPR053952">
    <property type="entry name" value="K_trans_C"/>
</dbReference>
<dbReference type="InterPro" id="IPR053951">
    <property type="entry name" value="K_trans_N"/>
</dbReference>
<dbReference type="InterPro" id="IPR023051">
    <property type="entry name" value="Kup"/>
</dbReference>
<dbReference type="PANTHER" id="PTHR30540:SF79">
    <property type="entry name" value="LOW AFFINITY POTASSIUM TRANSPORT SYSTEM PROTEIN KUP"/>
    <property type="match status" value="1"/>
</dbReference>
<dbReference type="PANTHER" id="PTHR30540">
    <property type="entry name" value="OSMOTIC STRESS POTASSIUM TRANSPORTER"/>
    <property type="match status" value="1"/>
</dbReference>
<dbReference type="Pfam" id="PF02705">
    <property type="entry name" value="K_trans"/>
    <property type="match status" value="1"/>
</dbReference>
<dbReference type="Pfam" id="PF22776">
    <property type="entry name" value="K_trans_C"/>
    <property type="match status" value="1"/>
</dbReference>
<name>KUP_ACISJ</name>
<evidence type="ECO:0000255" key="1">
    <source>
        <dbReference type="HAMAP-Rule" id="MF_01522"/>
    </source>
</evidence>
<keyword id="KW-0997">Cell inner membrane</keyword>
<keyword id="KW-1003">Cell membrane</keyword>
<keyword id="KW-0406">Ion transport</keyword>
<keyword id="KW-0472">Membrane</keyword>
<keyword id="KW-0630">Potassium</keyword>
<keyword id="KW-0633">Potassium transport</keyword>
<keyword id="KW-0769">Symport</keyword>
<keyword id="KW-0812">Transmembrane</keyword>
<keyword id="KW-1133">Transmembrane helix</keyword>
<keyword id="KW-0813">Transport</keyword>
<proteinExistence type="inferred from homology"/>
<comment type="function">
    <text evidence="1">Transport of potassium into the cell. Likely operates as a K(+):H(+) symporter.</text>
</comment>
<comment type="catalytic activity">
    <reaction evidence="1">
        <text>K(+)(in) + H(+)(in) = K(+)(out) + H(+)(out)</text>
        <dbReference type="Rhea" id="RHEA:28490"/>
        <dbReference type="ChEBI" id="CHEBI:15378"/>
        <dbReference type="ChEBI" id="CHEBI:29103"/>
    </reaction>
    <physiologicalReaction direction="right-to-left" evidence="1">
        <dbReference type="Rhea" id="RHEA:28492"/>
    </physiologicalReaction>
</comment>
<comment type="subcellular location">
    <subcellularLocation>
        <location evidence="1">Cell inner membrane</location>
        <topology evidence="1">Multi-pass membrane protein</topology>
    </subcellularLocation>
</comment>
<comment type="similarity">
    <text evidence="1">Belongs to the HAK/KUP transporter (TC 2.A.72) family.</text>
</comment>
<organism>
    <name type="scientific">Acidovorax sp. (strain JS42)</name>
    <dbReference type="NCBI Taxonomy" id="232721"/>
    <lineage>
        <taxon>Bacteria</taxon>
        <taxon>Pseudomonadati</taxon>
        <taxon>Pseudomonadota</taxon>
        <taxon>Betaproteobacteria</taxon>
        <taxon>Burkholderiales</taxon>
        <taxon>Comamonadaceae</taxon>
        <taxon>Acidovorax</taxon>
    </lineage>
</organism>
<feature type="chain" id="PRO_5000212251" description="Probable potassium transport system protein Kup">
    <location>
        <begin position="1"/>
        <end position="622"/>
    </location>
</feature>
<feature type="transmembrane region" description="Helical" evidence="1">
    <location>
        <begin position="8"/>
        <end position="28"/>
    </location>
</feature>
<feature type="transmembrane region" description="Helical" evidence="1">
    <location>
        <begin position="50"/>
        <end position="70"/>
    </location>
</feature>
<feature type="transmembrane region" description="Helical" evidence="1">
    <location>
        <begin position="100"/>
        <end position="120"/>
    </location>
</feature>
<feature type="transmembrane region" description="Helical" evidence="1">
    <location>
        <begin position="137"/>
        <end position="157"/>
    </location>
</feature>
<feature type="transmembrane region" description="Helical" evidence="1">
    <location>
        <begin position="169"/>
        <end position="189"/>
    </location>
</feature>
<feature type="transmembrane region" description="Helical" evidence="1">
    <location>
        <begin position="203"/>
        <end position="223"/>
    </location>
</feature>
<feature type="transmembrane region" description="Helical" evidence="1">
    <location>
        <begin position="247"/>
        <end position="267"/>
    </location>
</feature>
<feature type="transmembrane region" description="Helical" evidence="1">
    <location>
        <begin position="285"/>
        <end position="305"/>
    </location>
</feature>
<feature type="transmembrane region" description="Helical" evidence="1">
    <location>
        <begin position="337"/>
        <end position="357"/>
    </location>
</feature>
<feature type="transmembrane region" description="Helical" evidence="1">
    <location>
        <begin position="366"/>
        <end position="386"/>
    </location>
</feature>
<feature type="transmembrane region" description="Helical" evidence="1">
    <location>
        <begin position="392"/>
        <end position="412"/>
    </location>
</feature>
<feature type="transmembrane region" description="Helical" evidence="1">
    <location>
        <begin position="419"/>
        <end position="439"/>
    </location>
</feature>
<protein>
    <recommendedName>
        <fullName evidence="1">Probable potassium transport system protein Kup</fullName>
    </recommendedName>
</protein>
<reference key="1">
    <citation type="submission" date="2006-12" db="EMBL/GenBank/DDBJ databases">
        <title>Complete sequence of chromosome 1 of Acidovorax sp. JS42.</title>
        <authorList>
            <person name="Copeland A."/>
            <person name="Lucas S."/>
            <person name="Lapidus A."/>
            <person name="Barry K."/>
            <person name="Detter J.C."/>
            <person name="Glavina del Rio T."/>
            <person name="Dalin E."/>
            <person name="Tice H."/>
            <person name="Pitluck S."/>
            <person name="Chertkov O."/>
            <person name="Brettin T."/>
            <person name="Bruce D."/>
            <person name="Han C."/>
            <person name="Tapia R."/>
            <person name="Gilna P."/>
            <person name="Schmutz J."/>
            <person name="Larimer F."/>
            <person name="Land M."/>
            <person name="Hauser L."/>
            <person name="Kyrpides N."/>
            <person name="Kim E."/>
            <person name="Stahl D."/>
            <person name="Richardson P."/>
        </authorList>
    </citation>
    <scope>NUCLEOTIDE SEQUENCE [LARGE SCALE GENOMIC DNA]</scope>
    <source>
        <strain>JS42</strain>
    </source>
</reference>
<gene>
    <name evidence="1" type="primary">kup</name>
    <name type="ordered locus">Ajs_3909</name>
</gene>
<sequence>MQTSKSSLAALTLGAIGVVYGDIGTSVLYAVKEVFGSGHVPFTHANVYGVLSVLFWTLTVIVSLKYVVLVLRADNHGEGGLIAMLALASQAVKDRPRLRGWLLGLGIFGTSLFYGDGVITPAISVLSAIEGLEVVSPHFGKAVIPLTLVVLFGLFAVQKRGTAGVGRYFGPVTLVWFFTIAALGVPHIVGHPEILGALSPHHALGFILGNPGISFIILGAVVLCVTGAEALYADLGHFGKRPIRLAWFSVAMPALTINYFGQGALLLAEPSAVKNPFYMMAPDWALVPLVVLATMATVIASQALITGAFSVTKQVIQLGYLPRLNIQHTSVRETGQIYLPFVNWSLFVAIVLAVVMFRNSSNLAAAYGIAVTLDMLITTVLTFFVIRYGWGYPLALCVATTGFFFVVDLAFFSSNLLKLLQGGWFPLMIGGLVFTLMMTWKRGRELLNDKLREDSIGLQDFLASVQANPPMRVDGTAVFLSAEAGVVPNALLHNLKHNKVLHRQNLFVTVRYHETPWIGLDQRLQVAPLGGDCWQVTVNYGFKNELDLPSALRLMHGRGCELETMSTSYFLSRDVVVPTIGSGMAPWREKLFAQMHHNASGVAAFLHLPSNAVVELGSKVEI</sequence>
<accession>A1WCP0</accession>